<reference key="1">
    <citation type="journal article" date="2004" name="Nat. Biotechnol.">
        <title>The genome sequence of the extreme thermophile Thermus thermophilus.</title>
        <authorList>
            <person name="Henne A."/>
            <person name="Brueggemann H."/>
            <person name="Raasch C."/>
            <person name="Wiezer A."/>
            <person name="Hartsch T."/>
            <person name="Liesegang H."/>
            <person name="Johann A."/>
            <person name="Lienard T."/>
            <person name="Gohl O."/>
            <person name="Martinez-Arias R."/>
            <person name="Jacobi C."/>
            <person name="Starkuviene V."/>
            <person name="Schlenczeck S."/>
            <person name="Dencker S."/>
            <person name="Huber R."/>
            <person name="Klenk H.-P."/>
            <person name="Kramer W."/>
            <person name="Merkl R."/>
            <person name="Gottschalk G."/>
            <person name="Fritz H.-J."/>
        </authorList>
    </citation>
    <scope>NUCLEOTIDE SEQUENCE [LARGE SCALE GENOMIC DNA]</scope>
    <source>
        <strain>ATCC BAA-163 / DSM 7039 / HB27</strain>
    </source>
</reference>
<sequence>MAWPDLDPPRLAERPLSLQEALFVLEAPPEALPALAEAAIRVKEYFFGRRLKLVRLLNVKSGFCPEDCAYCAQSARSQAAIARYPLLSLEEILERAEEAQRLSARRFCLVAALRGPTPKVLERLGEAAQAIKARFPLELCASLGLLEEGMAEALKAAGFDYYNHNLNTAPSLYPRIATTHTYQDRLWTLKRAREAGLKLCSGVILGMGEGPKEVYEMALALRELGVESLPVNFLLPIPGTPLGDGRTVAGLTPERALKALILFRLLNPKAELRASAGRERYLGPYEPLAFRMVNSIFLQGYLTQPGSPWERDRALWESLGLDVEEGACG</sequence>
<dbReference type="EC" id="2.8.1.6" evidence="1"/>
<dbReference type="EMBL" id="AE017221">
    <property type="protein sequence ID" value="AAS80590.1"/>
    <property type="molecule type" value="Genomic_DNA"/>
</dbReference>
<dbReference type="RefSeq" id="WP_011172695.1">
    <property type="nucleotide sequence ID" value="NC_005835.1"/>
</dbReference>
<dbReference type="SMR" id="Q72L21"/>
<dbReference type="KEGG" id="tth:TT_C0242"/>
<dbReference type="eggNOG" id="COG0502">
    <property type="taxonomic scope" value="Bacteria"/>
</dbReference>
<dbReference type="HOGENOM" id="CLU_033172_2_1_0"/>
<dbReference type="OrthoDB" id="9786826at2"/>
<dbReference type="UniPathway" id="UPA00078">
    <property type="reaction ID" value="UER00162"/>
</dbReference>
<dbReference type="Proteomes" id="UP000000592">
    <property type="component" value="Chromosome"/>
</dbReference>
<dbReference type="GO" id="GO:0051537">
    <property type="term" value="F:2 iron, 2 sulfur cluster binding"/>
    <property type="evidence" value="ECO:0007669"/>
    <property type="project" value="UniProtKB-KW"/>
</dbReference>
<dbReference type="GO" id="GO:0051539">
    <property type="term" value="F:4 iron, 4 sulfur cluster binding"/>
    <property type="evidence" value="ECO:0007669"/>
    <property type="project" value="UniProtKB-KW"/>
</dbReference>
<dbReference type="GO" id="GO:0004076">
    <property type="term" value="F:biotin synthase activity"/>
    <property type="evidence" value="ECO:0007669"/>
    <property type="project" value="UniProtKB-UniRule"/>
</dbReference>
<dbReference type="GO" id="GO:0005506">
    <property type="term" value="F:iron ion binding"/>
    <property type="evidence" value="ECO:0007669"/>
    <property type="project" value="UniProtKB-UniRule"/>
</dbReference>
<dbReference type="GO" id="GO:0009102">
    <property type="term" value="P:biotin biosynthetic process"/>
    <property type="evidence" value="ECO:0007669"/>
    <property type="project" value="UniProtKB-UniRule"/>
</dbReference>
<dbReference type="CDD" id="cd01335">
    <property type="entry name" value="Radical_SAM"/>
    <property type="match status" value="1"/>
</dbReference>
<dbReference type="Gene3D" id="3.20.20.70">
    <property type="entry name" value="Aldolase class I"/>
    <property type="match status" value="1"/>
</dbReference>
<dbReference type="HAMAP" id="MF_01694">
    <property type="entry name" value="BioB"/>
    <property type="match status" value="1"/>
</dbReference>
<dbReference type="InterPro" id="IPR013785">
    <property type="entry name" value="Aldolase_TIM"/>
</dbReference>
<dbReference type="InterPro" id="IPR010722">
    <property type="entry name" value="BATS_dom"/>
</dbReference>
<dbReference type="InterPro" id="IPR002684">
    <property type="entry name" value="Biotin_synth/BioAB"/>
</dbReference>
<dbReference type="InterPro" id="IPR024177">
    <property type="entry name" value="Biotin_synthase"/>
</dbReference>
<dbReference type="InterPro" id="IPR006638">
    <property type="entry name" value="Elp3/MiaA/NifB-like_rSAM"/>
</dbReference>
<dbReference type="InterPro" id="IPR007197">
    <property type="entry name" value="rSAM"/>
</dbReference>
<dbReference type="NCBIfam" id="TIGR00433">
    <property type="entry name" value="bioB"/>
    <property type="match status" value="1"/>
</dbReference>
<dbReference type="PANTHER" id="PTHR22976">
    <property type="entry name" value="BIOTIN SYNTHASE"/>
    <property type="match status" value="1"/>
</dbReference>
<dbReference type="PANTHER" id="PTHR22976:SF2">
    <property type="entry name" value="BIOTIN SYNTHASE, MITOCHONDRIAL"/>
    <property type="match status" value="1"/>
</dbReference>
<dbReference type="Pfam" id="PF06968">
    <property type="entry name" value="BATS"/>
    <property type="match status" value="1"/>
</dbReference>
<dbReference type="Pfam" id="PF04055">
    <property type="entry name" value="Radical_SAM"/>
    <property type="match status" value="1"/>
</dbReference>
<dbReference type="PIRSF" id="PIRSF001619">
    <property type="entry name" value="Biotin_synth"/>
    <property type="match status" value="1"/>
</dbReference>
<dbReference type="SFLD" id="SFLDG01060">
    <property type="entry name" value="BATS_domain_containing"/>
    <property type="match status" value="1"/>
</dbReference>
<dbReference type="SFLD" id="SFLDG01278">
    <property type="entry name" value="biotin_synthase_like"/>
    <property type="match status" value="1"/>
</dbReference>
<dbReference type="SMART" id="SM00876">
    <property type="entry name" value="BATS"/>
    <property type="match status" value="1"/>
</dbReference>
<dbReference type="SMART" id="SM00729">
    <property type="entry name" value="Elp3"/>
    <property type="match status" value="1"/>
</dbReference>
<dbReference type="SUPFAM" id="SSF102114">
    <property type="entry name" value="Radical SAM enzymes"/>
    <property type="match status" value="1"/>
</dbReference>
<dbReference type="PROSITE" id="PS51918">
    <property type="entry name" value="RADICAL_SAM"/>
    <property type="match status" value="1"/>
</dbReference>
<evidence type="ECO:0000255" key="1">
    <source>
        <dbReference type="HAMAP-Rule" id="MF_01694"/>
    </source>
</evidence>
<evidence type="ECO:0000255" key="2">
    <source>
        <dbReference type="PROSITE-ProRule" id="PRU01266"/>
    </source>
</evidence>
<feature type="chain" id="PRO_0000381686" description="Biotin synthase">
    <location>
        <begin position="1"/>
        <end position="329"/>
    </location>
</feature>
<feature type="domain" description="Radical SAM core" evidence="2">
    <location>
        <begin position="46"/>
        <end position="275"/>
    </location>
</feature>
<feature type="binding site" evidence="1">
    <location>
        <position position="64"/>
    </location>
    <ligand>
        <name>[4Fe-4S] cluster</name>
        <dbReference type="ChEBI" id="CHEBI:49883"/>
        <note>4Fe-4S-S-AdoMet</note>
    </ligand>
</feature>
<feature type="binding site" evidence="1">
    <location>
        <position position="68"/>
    </location>
    <ligand>
        <name>[4Fe-4S] cluster</name>
        <dbReference type="ChEBI" id="CHEBI:49883"/>
        <note>4Fe-4S-S-AdoMet</note>
    </ligand>
</feature>
<feature type="binding site" evidence="1">
    <location>
        <position position="71"/>
    </location>
    <ligand>
        <name>[4Fe-4S] cluster</name>
        <dbReference type="ChEBI" id="CHEBI:49883"/>
        <note>4Fe-4S-S-AdoMet</note>
    </ligand>
</feature>
<feature type="binding site" evidence="1">
    <location>
        <position position="108"/>
    </location>
    <ligand>
        <name>[2Fe-2S] cluster</name>
        <dbReference type="ChEBI" id="CHEBI:190135"/>
    </ligand>
</feature>
<feature type="binding site" evidence="1">
    <location>
        <position position="140"/>
    </location>
    <ligand>
        <name>[2Fe-2S] cluster</name>
        <dbReference type="ChEBI" id="CHEBI:190135"/>
    </ligand>
</feature>
<feature type="binding site" evidence="1">
    <location>
        <position position="200"/>
    </location>
    <ligand>
        <name>[2Fe-2S] cluster</name>
        <dbReference type="ChEBI" id="CHEBI:190135"/>
    </ligand>
</feature>
<feature type="binding site" evidence="1">
    <location>
        <position position="273"/>
    </location>
    <ligand>
        <name>[2Fe-2S] cluster</name>
        <dbReference type="ChEBI" id="CHEBI:190135"/>
    </ligand>
</feature>
<comment type="function">
    <text evidence="1">Catalyzes the conversion of dethiobiotin (DTB) to biotin by the insertion of a sulfur atom into dethiobiotin via a radical-based mechanism.</text>
</comment>
<comment type="catalytic activity">
    <reaction evidence="1">
        <text>(4R,5S)-dethiobiotin + (sulfur carrier)-SH + 2 reduced [2Fe-2S]-[ferredoxin] + 2 S-adenosyl-L-methionine = (sulfur carrier)-H + biotin + 2 5'-deoxyadenosine + 2 L-methionine + 2 oxidized [2Fe-2S]-[ferredoxin]</text>
        <dbReference type="Rhea" id="RHEA:22060"/>
        <dbReference type="Rhea" id="RHEA-COMP:10000"/>
        <dbReference type="Rhea" id="RHEA-COMP:10001"/>
        <dbReference type="Rhea" id="RHEA-COMP:14737"/>
        <dbReference type="Rhea" id="RHEA-COMP:14739"/>
        <dbReference type="ChEBI" id="CHEBI:17319"/>
        <dbReference type="ChEBI" id="CHEBI:29917"/>
        <dbReference type="ChEBI" id="CHEBI:33737"/>
        <dbReference type="ChEBI" id="CHEBI:33738"/>
        <dbReference type="ChEBI" id="CHEBI:57586"/>
        <dbReference type="ChEBI" id="CHEBI:57844"/>
        <dbReference type="ChEBI" id="CHEBI:59789"/>
        <dbReference type="ChEBI" id="CHEBI:64428"/>
        <dbReference type="ChEBI" id="CHEBI:149473"/>
        <dbReference type="EC" id="2.8.1.6"/>
    </reaction>
</comment>
<comment type="cofactor">
    <cofactor evidence="1">
        <name>[4Fe-4S] cluster</name>
        <dbReference type="ChEBI" id="CHEBI:49883"/>
    </cofactor>
    <text evidence="1">Binds 1 [4Fe-4S] cluster. The cluster is coordinated with 3 cysteines and an exchangeable S-adenosyl-L-methionine.</text>
</comment>
<comment type="cofactor">
    <cofactor evidence="1">
        <name>[2Fe-2S] cluster</name>
        <dbReference type="ChEBI" id="CHEBI:190135"/>
    </cofactor>
    <text evidence="1">Binds 1 [2Fe-2S] cluster. The cluster is coordinated with 3 cysteines and 1 arginine.</text>
</comment>
<comment type="pathway">
    <text evidence="1">Cofactor biosynthesis; biotin biosynthesis; biotin from 7,8-diaminononanoate: step 2/2.</text>
</comment>
<comment type="subunit">
    <text evidence="1">Homodimer.</text>
</comment>
<comment type="similarity">
    <text evidence="1">Belongs to the radical SAM superfamily. Biotin synthase family.</text>
</comment>
<name>BIOB_THET2</name>
<protein>
    <recommendedName>
        <fullName evidence="1">Biotin synthase</fullName>
        <ecNumber evidence="1">2.8.1.6</ecNumber>
    </recommendedName>
</protein>
<keyword id="KW-0001">2Fe-2S</keyword>
<keyword id="KW-0004">4Fe-4S</keyword>
<keyword id="KW-0093">Biotin biosynthesis</keyword>
<keyword id="KW-0408">Iron</keyword>
<keyword id="KW-0411">Iron-sulfur</keyword>
<keyword id="KW-0479">Metal-binding</keyword>
<keyword id="KW-0949">S-adenosyl-L-methionine</keyword>
<keyword id="KW-0808">Transferase</keyword>
<proteinExistence type="inferred from homology"/>
<organism>
    <name type="scientific">Thermus thermophilus (strain ATCC BAA-163 / DSM 7039 / HB27)</name>
    <dbReference type="NCBI Taxonomy" id="262724"/>
    <lineage>
        <taxon>Bacteria</taxon>
        <taxon>Thermotogati</taxon>
        <taxon>Deinococcota</taxon>
        <taxon>Deinococci</taxon>
        <taxon>Thermales</taxon>
        <taxon>Thermaceae</taxon>
        <taxon>Thermus</taxon>
    </lineage>
</organism>
<gene>
    <name evidence="1" type="primary">bioB</name>
    <name type="ordered locus">TT_C0242</name>
</gene>
<accession>Q72L21</accession>